<proteinExistence type="inferred from homology"/>
<name>RL33_ANAMF</name>
<gene>
    <name evidence="1" type="primary">rpmG</name>
    <name type="ordered locus">AMF_1036</name>
</gene>
<evidence type="ECO:0000255" key="1">
    <source>
        <dbReference type="HAMAP-Rule" id="MF_00294"/>
    </source>
</evidence>
<evidence type="ECO:0000305" key="2"/>
<feature type="chain" id="PRO_1000194045" description="Large ribosomal subunit protein bL33">
    <location>
        <begin position="1"/>
        <end position="56"/>
    </location>
</feature>
<sequence>MAKKGSGLLVKLVSSEGTGYFYVKKRDPKKLVEKLSFRKYDPVARKHVLFKEEKLR</sequence>
<comment type="similarity">
    <text evidence="1">Belongs to the bacterial ribosomal protein bL33 family.</text>
</comment>
<keyword id="KW-1185">Reference proteome</keyword>
<keyword id="KW-0687">Ribonucleoprotein</keyword>
<keyword id="KW-0689">Ribosomal protein</keyword>
<dbReference type="EMBL" id="CP001079">
    <property type="protein sequence ID" value="ACM49128.1"/>
    <property type="molecule type" value="Genomic_DNA"/>
</dbReference>
<dbReference type="RefSeq" id="WP_010263289.1">
    <property type="nucleotide sequence ID" value="NZ_AFMS01000048.1"/>
</dbReference>
<dbReference type="SMR" id="B9KI16"/>
<dbReference type="STRING" id="320483.AMF_1036"/>
<dbReference type="GeneID" id="7398366"/>
<dbReference type="KEGG" id="amf:AMF_1036"/>
<dbReference type="eggNOG" id="COG0267">
    <property type="taxonomic scope" value="Bacteria"/>
</dbReference>
<dbReference type="HOGENOM" id="CLU_190949_1_0_5"/>
<dbReference type="Proteomes" id="UP000007307">
    <property type="component" value="Chromosome"/>
</dbReference>
<dbReference type="GO" id="GO:0005737">
    <property type="term" value="C:cytoplasm"/>
    <property type="evidence" value="ECO:0007669"/>
    <property type="project" value="UniProtKB-ARBA"/>
</dbReference>
<dbReference type="GO" id="GO:0015934">
    <property type="term" value="C:large ribosomal subunit"/>
    <property type="evidence" value="ECO:0007669"/>
    <property type="project" value="TreeGrafter"/>
</dbReference>
<dbReference type="GO" id="GO:0003735">
    <property type="term" value="F:structural constituent of ribosome"/>
    <property type="evidence" value="ECO:0007669"/>
    <property type="project" value="InterPro"/>
</dbReference>
<dbReference type="GO" id="GO:0006412">
    <property type="term" value="P:translation"/>
    <property type="evidence" value="ECO:0007669"/>
    <property type="project" value="UniProtKB-UniRule"/>
</dbReference>
<dbReference type="Gene3D" id="2.20.28.120">
    <property type="entry name" value="Ribosomal protein L33"/>
    <property type="match status" value="1"/>
</dbReference>
<dbReference type="HAMAP" id="MF_00294">
    <property type="entry name" value="Ribosomal_bL33"/>
    <property type="match status" value="1"/>
</dbReference>
<dbReference type="InterPro" id="IPR001705">
    <property type="entry name" value="Ribosomal_bL33"/>
</dbReference>
<dbReference type="InterPro" id="IPR038584">
    <property type="entry name" value="Ribosomal_bL33_sf"/>
</dbReference>
<dbReference type="InterPro" id="IPR011332">
    <property type="entry name" value="Ribosomal_zn-bd"/>
</dbReference>
<dbReference type="NCBIfam" id="NF001860">
    <property type="entry name" value="PRK00595.1"/>
    <property type="match status" value="1"/>
</dbReference>
<dbReference type="NCBIfam" id="TIGR01023">
    <property type="entry name" value="rpmG_bact"/>
    <property type="match status" value="1"/>
</dbReference>
<dbReference type="PANTHER" id="PTHR15238">
    <property type="entry name" value="54S RIBOSOMAL PROTEIN L39, MITOCHONDRIAL"/>
    <property type="match status" value="1"/>
</dbReference>
<dbReference type="PANTHER" id="PTHR15238:SF1">
    <property type="entry name" value="LARGE RIBOSOMAL SUBUNIT PROTEIN BL33M"/>
    <property type="match status" value="1"/>
</dbReference>
<dbReference type="Pfam" id="PF00471">
    <property type="entry name" value="Ribosomal_L33"/>
    <property type="match status" value="1"/>
</dbReference>
<dbReference type="SUPFAM" id="SSF57829">
    <property type="entry name" value="Zn-binding ribosomal proteins"/>
    <property type="match status" value="1"/>
</dbReference>
<protein>
    <recommendedName>
        <fullName evidence="1">Large ribosomal subunit protein bL33</fullName>
    </recommendedName>
    <alternativeName>
        <fullName evidence="2">50S ribosomal protein L33</fullName>
    </alternativeName>
</protein>
<organism>
    <name type="scientific">Anaplasma marginale (strain Florida)</name>
    <dbReference type="NCBI Taxonomy" id="320483"/>
    <lineage>
        <taxon>Bacteria</taxon>
        <taxon>Pseudomonadati</taxon>
        <taxon>Pseudomonadota</taxon>
        <taxon>Alphaproteobacteria</taxon>
        <taxon>Rickettsiales</taxon>
        <taxon>Anaplasmataceae</taxon>
        <taxon>Anaplasma</taxon>
    </lineage>
</organism>
<accession>B9KI16</accession>
<reference key="1">
    <citation type="journal article" date="2009" name="BMC Genomics">
        <title>Conservation in the face of diversity: multistrain analysis of an intracellular bacterium.</title>
        <authorList>
            <person name="Dark M.J."/>
            <person name="Herndon D.R."/>
            <person name="Kappmeyer L.S."/>
            <person name="Gonzales M.P."/>
            <person name="Nordeen E."/>
            <person name="Palmer G.H."/>
            <person name="Knowles D.P. Jr."/>
            <person name="Brayton K.A."/>
        </authorList>
    </citation>
    <scope>NUCLEOTIDE SEQUENCE [LARGE SCALE GENOMIC DNA]</scope>
    <source>
        <strain>Florida</strain>
    </source>
</reference>